<protein>
    <recommendedName>
        <fullName evidence="8">Histidine N-alpha-methyltransferase</fullName>
        <ecNumber evidence="1 5">2.1.1.44</ecNumber>
    </recommendedName>
    <alternativeName>
        <fullName evidence="7">Histidine trimethyltransferase</fullName>
    </alternativeName>
</protein>
<reference key="1">
    <citation type="submission" date="2006-10" db="EMBL/GenBank/DDBJ databases">
        <authorList>
            <person name="Fleischmann R.D."/>
            <person name="Dodson R.J."/>
            <person name="Haft D.H."/>
            <person name="Merkel J.S."/>
            <person name="Nelson W.C."/>
            <person name="Fraser C.M."/>
        </authorList>
    </citation>
    <scope>NUCLEOTIDE SEQUENCE [LARGE SCALE GENOMIC DNA]</scope>
    <source>
        <strain>ATCC 700084 / mc(2)155</strain>
    </source>
</reference>
<reference key="2">
    <citation type="journal article" date="2007" name="Genome Biol.">
        <title>Interrupted coding sequences in Mycobacterium smegmatis: authentic mutations or sequencing errors?</title>
        <authorList>
            <person name="Deshayes C."/>
            <person name="Perrodou E."/>
            <person name="Gallien S."/>
            <person name="Euphrasie D."/>
            <person name="Schaeffer C."/>
            <person name="Van-Dorsselaer A."/>
            <person name="Poch O."/>
            <person name="Lecompte O."/>
            <person name="Reyrat J.-M."/>
        </authorList>
    </citation>
    <scope>NUCLEOTIDE SEQUENCE [LARGE SCALE GENOMIC DNA]</scope>
    <source>
        <strain>ATCC 700084 / mc(2)155</strain>
    </source>
</reference>
<reference key="3">
    <citation type="journal article" date="2009" name="Genome Res.">
        <title>Ortho-proteogenomics: multiple proteomes investigation through orthology and a new MS-based protocol.</title>
        <authorList>
            <person name="Gallien S."/>
            <person name="Perrodou E."/>
            <person name="Carapito C."/>
            <person name="Deshayes C."/>
            <person name="Reyrat J.-M."/>
            <person name="Van Dorsselaer A."/>
            <person name="Poch O."/>
            <person name="Schaeffer C."/>
            <person name="Lecompte O."/>
        </authorList>
    </citation>
    <scope>NUCLEOTIDE SEQUENCE [LARGE SCALE GENOMIC DNA]</scope>
    <source>
        <strain>ATCC 700084 / mc(2)155</strain>
    </source>
</reference>
<reference key="4">
    <citation type="journal article" date="2010" name="J. Am. Chem. Soc.">
        <title>In vitro reconstitution of Mycobacterial ergothioneine biosynthesis.</title>
        <authorList>
            <person name="Seebeck F.P."/>
        </authorList>
    </citation>
    <scope>FUNCTION</scope>
    <scope>CATALYTIC ACTIVITY</scope>
    <scope>SUBSTRATE SPECIFICITY</scope>
    <scope>GENE NAME</scope>
    <scope>PATHWAY</scope>
    <source>
        <strain>ATCC 607 / DSM 43465 / JCM 20379 / NBRC 3207 / NRRL B-692</strain>
    </source>
</reference>
<reference key="5">
    <citation type="journal article" date="2013" name="Antimicrob. Agents Chemother.">
        <title>Ergothioneine is a secreted antioxidant in Mycobacterium smegmatis.</title>
        <authorList>
            <person name="Sao Emani C."/>
            <person name="Williams M.J."/>
            <person name="Wiid I.J."/>
            <person name="Hiten N.F."/>
            <person name="Viljoen A.J."/>
            <person name="Pietersen R.D."/>
            <person name="van Helden P.D."/>
            <person name="Baker B."/>
        </authorList>
    </citation>
    <scope>DISRUPTION PHENOTYPE</scope>
    <scope>PATHWAY</scope>
    <source>
        <strain>ATCC 700084 / mc(2)155</strain>
    </source>
</reference>
<reference key="6">
    <citation type="journal article" date="2014" name="Acta Crystallogr. F">
        <title>Crystallization and preliminary X-ray analysis of the ergothioneine-biosynthetic methyltransferase EgtD.</title>
        <authorList>
            <person name="Vit A."/>
            <person name="Misson L."/>
            <person name="Blankenfeldt W."/>
            <person name="Seebeck F.P."/>
        </authorList>
    </citation>
    <scope>CRYSTALLIZATION</scope>
    <scope>SUBUNIT</scope>
    <source>
        <strain>ATCC 607 / DSM 43465 / JCM 20379 / NBRC 3207 / NRRL B-692</strain>
    </source>
</reference>
<reference key="7">
    <citation type="journal article" date="2014" name="Biochem. Biophys. Res. Commun.">
        <title>Structural insights into the histidine trimethylation activity of EgtD from Mycobacterium smegmatis.</title>
        <authorList>
            <person name="Jeong J.H."/>
            <person name="Cha H.J."/>
            <person name="Ha S.C."/>
            <person name="Rojviriya C."/>
            <person name="Kim Y.G."/>
        </authorList>
    </citation>
    <scope>X-RAY CRYSTALLOGRAPHY (2.00 ANGSTROMS) OF APOENZYME AND COMPLEXES WITH L-HISTIDINE AND S-ADENOSYL-L-HOMOCYSTEINE</scope>
    <scope>DOMAIN</scope>
    <scope>SUBUNIT</scope>
    <scope>REACTION MECHANISM</scope>
</reference>
<reference key="8">
    <citation type="journal article" date="2015" name="ChemBioChem">
        <title>Ergothioneine biosynthetic methyltransferase EgtD reveals the structural basis of aromatic amino acid betaine biosynthesis.</title>
        <authorList>
            <person name="Vit A."/>
            <person name="Misson L."/>
            <person name="Blankenfeldt W."/>
            <person name="Seebeck F.P."/>
        </authorList>
    </citation>
    <scope>X-RAY CRYSTALLOGRAPHY (1.51 ANGSTROMS) OF APOENZYME; WILD-TYPE IN COMPLEXES WITH N,N-DIMETHYL-L-HISTIDINE AND S-ADENOSYL-L-HOMOCYSTEINE (SAH) AND MUTANT VAL-252/ALA-282 IN COMPLEX WITH TRYPTOPHAN AND SAH</scope>
    <scope>FUNCTION</scope>
    <scope>CATALYTIC ACTIVITY</scope>
    <scope>BIOPHYSICOCHEMICAL PROPERTIES</scope>
    <scope>MUTAGENESIS OF MET-252 AND GLU-282</scope>
    <source>
        <strain>ATCC 607 / DSM 43465 / JCM 20379 / NBRC 3207 / NRRL B-692</strain>
    </source>
</reference>
<feature type="chain" id="PRO_0000413651" description="Histidine N-alpha-methyltransferase">
    <location>
        <begin position="1"/>
        <end position="321"/>
    </location>
</feature>
<feature type="binding site" evidence="4 11 14 15">
    <location>
        <position position="56"/>
    </location>
    <ligand>
        <name>L-histidine</name>
        <dbReference type="ChEBI" id="CHEBI:57595"/>
    </ligand>
</feature>
<feature type="binding site" evidence="10 11">
    <location>
        <position position="86"/>
    </location>
    <ligand>
        <name>S-adenosyl-L-methionine</name>
        <dbReference type="ChEBI" id="CHEBI:59789"/>
    </ligand>
</feature>
<feature type="binding site" evidence="10 11">
    <location>
        <position position="92"/>
    </location>
    <ligand>
        <name>S-adenosyl-L-methionine</name>
        <dbReference type="ChEBI" id="CHEBI:59789"/>
    </ligand>
</feature>
<feature type="binding site" evidence="10 11">
    <location>
        <position position="113"/>
    </location>
    <ligand>
        <name>S-adenosyl-L-methionine</name>
        <dbReference type="ChEBI" id="CHEBI:59789"/>
    </ligand>
</feature>
<feature type="binding site" evidence="10 11 12 13 14">
    <location>
        <begin position="141"/>
        <end position="142"/>
    </location>
    <ligand>
        <name>S-adenosyl-L-methionine</name>
        <dbReference type="ChEBI" id="CHEBI:59789"/>
    </ligand>
</feature>
<feature type="binding site" evidence="4 11 14 15">
    <location>
        <position position="166"/>
    </location>
    <ligand>
        <name>L-histidine</name>
        <dbReference type="ChEBI" id="CHEBI:57595"/>
    </ligand>
</feature>
<feature type="binding site" evidence="4 11 14 15">
    <location>
        <position position="206"/>
    </location>
    <ligand>
        <name>L-histidine</name>
        <dbReference type="ChEBI" id="CHEBI:57595"/>
    </ligand>
</feature>
<feature type="binding site" evidence="4 11 14 15">
    <location>
        <begin position="282"/>
        <end position="284"/>
    </location>
    <ligand>
        <name>L-histidine</name>
        <dbReference type="ChEBI" id="CHEBI:57595"/>
    </ligand>
</feature>
<feature type="mutagenesis site" description="Dramatic change in substrate specificity since the tryptophan-specific activity is increased more than 2000-fold and the histidine-specific activity is reduced 3000-fold; when associated with A-282." evidence="5">
    <original>M</original>
    <variation>V</variation>
    <location>
        <position position="252"/>
    </location>
</feature>
<feature type="mutagenesis site" description="130-fold reduction in catalytic efficiency. Dramatic change in substrate specificity since the tryptophan-specific activity is increased more than 2000-fold and the histidine-specific activity is reduced 3000-fold; when associated with V-252." evidence="5">
    <original>E</original>
    <variation>A</variation>
    <location>
        <position position="282"/>
    </location>
</feature>
<feature type="strand" evidence="16">
    <location>
        <begin position="5"/>
        <end position="10"/>
    </location>
</feature>
<feature type="helix" evidence="16">
    <location>
        <begin position="11"/>
        <end position="14"/>
    </location>
</feature>
<feature type="helix" evidence="16">
    <location>
        <begin position="16"/>
        <end position="27"/>
    </location>
</feature>
<feature type="strand" evidence="16">
    <location>
        <begin position="28"/>
        <end position="30"/>
    </location>
</feature>
<feature type="helix" evidence="16">
    <location>
        <begin position="35"/>
        <end position="38"/>
    </location>
</feature>
<feature type="helix" evidence="16">
    <location>
        <begin position="41"/>
        <end position="50"/>
    </location>
</feature>
<feature type="strand" evidence="17">
    <location>
        <begin position="53"/>
        <end position="55"/>
    </location>
</feature>
<feature type="helix" evidence="16">
    <location>
        <begin position="58"/>
        <end position="77"/>
    </location>
</feature>
<feature type="strand" evidence="16">
    <location>
        <begin position="80"/>
        <end position="85"/>
    </location>
</feature>
<feature type="helix" evidence="16">
    <location>
        <begin position="93"/>
        <end position="102"/>
    </location>
</feature>
<feature type="strand" evidence="16">
    <location>
        <begin position="108"/>
        <end position="114"/>
    </location>
</feature>
<feature type="helix" evidence="16">
    <location>
        <begin position="116"/>
        <end position="129"/>
    </location>
</feature>
<feature type="strand" evidence="16">
    <location>
        <begin position="138"/>
        <end position="140"/>
    </location>
</feature>
<feature type="turn" evidence="16">
    <location>
        <begin position="142"/>
        <end position="144"/>
    </location>
</feature>
<feature type="helix" evidence="16">
    <location>
        <begin position="146"/>
        <end position="148"/>
    </location>
</feature>
<feature type="strand" evidence="16">
    <location>
        <begin position="153"/>
        <end position="159"/>
    </location>
</feature>
<feature type="helix" evidence="16">
    <location>
        <begin position="163"/>
        <end position="166"/>
    </location>
</feature>
<feature type="helix" evidence="16">
    <location>
        <begin position="169"/>
        <end position="180"/>
    </location>
</feature>
<feature type="strand" evidence="16">
    <location>
        <begin position="188"/>
        <end position="195"/>
    </location>
</feature>
<feature type="helix" evidence="16">
    <location>
        <begin position="199"/>
        <end position="205"/>
    </location>
</feature>
<feature type="helix" evidence="16">
    <location>
        <begin position="212"/>
        <end position="228"/>
    </location>
</feature>
<feature type="helix" evidence="16">
    <location>
        <begin position="234"/>
        <end position="236"/>
    </location>
</feature>
<feature type="strand" evidence="16">
    <location>
        <begin position="237"/>
        <end position="244"/>
    </location>
</feature>
<feature type="turn" evidence="16">
    <location>
        <begin position="245"/>
        <end position="248"/>
    </location>
</feature>
<feature type="strand" evidence="16">
    <location>
        <begin position="249"/>
        <end position="258"/>
    </location>
</feature>
<feature type="strand" evidence="16">
    <location>
        <begin position="260"/>
        <end position="264"/>
    </location>
</feature>
<feature type="helix" evidence="16">
    <location>
        <begin position="265"/>
        <end position="267"/>
    </location>
</feature>
<feature type="strand" evidence="16">
    <location>
        <begin position="269"/>
        <end position="273"/>
    </location>
</feature>
<feature type="strand" evidence="16">
    <location>
        <begin position="278"/>
        <end position="285"/>
    </location>
</feature>
<feature type="helix" evidence="16">
    <location>
        <begin position="289"/>
        <end position="298"/>
    </location>
</feature>
<feature type="strand" evidence="16">
    <location>
        <begin position="302"/>
        <end position="308"/>
    </location>
</feature>
<feature type="strand" evidence="16">
    <location>
        <begin position="314"/>
        <end position="320"/>
    </location>
</feature>
<evidence type="ECO:0000269" key="1">
    <source>
    </source>
</evidence>
<evidence type="ECO:0000269" key="2">
    <source>
    </source>
</evidence>
<evidence type="ECO:0000269" key="3">
    <source>
    </source>
</evidence>
<evidence type="ECO:0000269" key="4">
    <source>
    </source>
</evidence>
<evidence type="ECO:0000269" key="5">
    <source>
    </source>
</evidence>
<evidence type="ECO:0000303" key="6">
    <source>
    </source>
</evidence>
<evidence type="ECO:0000303" key="7">
    <source>
    </source>
</evidence>
<evidence type="ECO:0000305" key="8"/>
<evidence type="ECO:0000305" key="9">
    <source>
    </source>
</evidence>
<evidence type="ECO:0000305" key="10">
    <source>
    </source>
</evidence>
<evidence type="ECO:0000305" key="11">
    <source>
    </source>
</evidence>
<evidence type="ECO:0007744" key="12">
    <source>
        <dbReference type="PDB" id="4PIO"/>
    </source>
</evidence>
<evidence type="ECO:0007744" key="13">
    <source>
        <dbReference type="PDB" id="4PIP"/>
    </source>
</evidence>
<evidence type="ECO:0007744" key="14">
    <source>
        <dbReference type="PDB" id="4UY6"/>
    </source>
</evidence>
<evidence type="ECO:0007744" key="15">
    <source>
        <dbReference type="PDB" id="4UY7"/>
    </source>
</evidence>
<evidence type="ECO:0007829" key="16">
    <source>
        <dbReference type="PDB" id="4PIO"/>
    </source>
</evidence>
<evidence type="ECO:0007829" key="17">
    <source>
        <dbReference type="PDB" id="6FNT"/>
    </source>
</evidence>
<organism>
    <name type="scientific">Mycolicibacterium smegmatis (strain ATCC 700084 / mc(2)155)</name>
    <name type="common">Mycobacterium smegmatis</name>
    <dbReference type="NCBI Taxonomy" id="246196"/>
    <lineage>
        <taxon>Bacteria</taxon>
        <taxon>Bacillati</taxon>
        <taxon>Actinomycetota</taxon>
        <taxon>Actinomycetes</taxon>
        <taxon>Mycobacteriales</taxon>
        <taxon>Mycobacteriaceae</taxon>
        <taxon>Mycolicibacterium</taxon>
    </lineage>
</organism>
<proteinExistence type="evidence at protein level"/>
<sequence length="321" mass="35003">MTLSLANYLAADSAAEALRRDVRAGLTAAPKSLPPKWFYDAVGSDLFDQITRLPEYYPTRTEAQILRTRSAEIIAAAGADTLVELGSGTSEKTRMLLDAMRDAELLRRFIPFDVDAGVLRSAGAAIGAEYPGIEIDAVCGDFEEHLGKIPHVGRRLVVFLGSTIGNLTPAPRAEFLSTLADTLQPGDSLLLGTDLVKDTGRLVRAYDDAAGVTAAFNRNVLAVVNRELSADFDLDAFEHVAKWNSDEERIEMWLRARTAQHVRVAALDLEVDFAAGEEMLTEVSCKFRPENVVAELAEAGLRQTHWWTDPAGDFGLSLAVR</sequence>
<keyword id="KW-0002">3D-structure</keyword>
<keyword id="KW-0489">Methyltransferase</keyword>
<keyword id="KW-1185">Reference proteome</keyword>
<keyword id="KW-0949">S-adenosyl-L-methionine</keyword>
<keyword id="KW-0808">Transferase</keyword>
<dbReference type="EC" id="2.1.1.44" evidence="1 5"/>
<dbReference type="EMBL" id="CP000480">
    <property type="protein sequence ID" value="ABK75457.1"/>
    <property type="molecule type" value="Genomic_DNA"/>
</dbReference>
<dbReference type="EMBL" id="CP001663">
    <property type="protein sequence ID" value="AFP42517.1"/>
    <property type="molecule type" value="Genomic_DNA"/>
</dbReference>
<dbReference type="RefSeq" id="WP_011731156.1">
    <property type="nucleotide sequence ID" value="NZ_SIJM01000027.1"/>
</dbReference>
<dbReference type="RefSeq" id="YP_890466.1">
    <property type="nucleotide sequence ID" value="NC_008596.1"/>
</dbReference>
<dbReference type="PDB" id="4PIM">
    <property type="method" value="X-ray"/>
    <property type="resolution" value="1.75 A"/>
    <property type="chains" value="A/B=1-321"/>
</dbReference>
<dbReference type="PDB" id="4PIN">
    <property type="method" value="X-ray"/>
    <property type="resolution" value="1.90 A"/>
    <property type="chains" value="A/B=1-321"/>
</dbReference>
<dbReference type="PDB" id="4PIO">
    <property type="method" value="X-ray"/>
    <property type="resolution" value="1.51 A"/>
    <property type="chains" value="A/B=1-321"/>
</dbReference>
<dbReference type="PDB" id="4PIP">
    <property type="method" value="X-ray"/>
    <property type="resolution" value="1.80 A"/>
    <property type="chains" value="A/B/C/D=1-321"/>
</dbReference>
<dbReference type="PDB" id="4UY5">
    <property type="method" value="X-ray"/>
    <property type="resolution" value="2.00 A"/>
    <property type="chains" value="A=1-321"/>
</dbReference>
<dbReference type="PDB" id="4UY6">
    <property type="method" value="X-ray"/>
    <property type="resolution" value="2.04 A"/>
    <property type="chains" value="A=2-321"/>
</dbReference>
<dbReference type="PDB" id="4UY7">
    <property type="method" value="X-ray"/>
    <property type="resolution" value="2.31 A"/>
    <property type="chains" value="A/B=2-321"/>
</dbReference>
<dbReference type="PDB" id="6FNQ">
    <property type="method" value="X-ray"/>
    <property type="resolution" value="1.75 A"/>
    <property type="chains" value="A/B=3-321"/>
</dbReference>
<dbReference type="PDB" id="6FNR">
    <property type="method" value="X-ray"/>
    <property type="resolution" value="1.83 A"/>
    <property type="chains" value="A/B=3-321"/>
</dbReference>
<dbReference type="PDB" id="6FNS">
    <property type="method" value="X-ray"/>
    <property type="resolution" value="1.85 A"/>
    <property type="chains" value="A/B=3-321"/>
</dbReference>
<dbReference type="PDB" id="6FNT">
    <property type="method" value="X-ray"/>
    <property type="resolution" value="1.90 A"/>
    <property type="chains" value="A/B=3-321"/>
</dbReference>
<dbReference type="PDBsum" id="4PIM"/>
<dbReference type="PDBsum" id="4PIN"/>
<dbReference type="PDBsum" id="4PIO"/>
<dbReference type="PDBsum" id="4PIP"/>
<dbReference type="PDBsum" id="4UY5"/>
<dbReference type="PDBsum" id="4UY6"/>
<dbReference type="PDBsum" id="4UY7"/>
<dbReference type="PDBsum" id="6FNQ"/>
<dbReference type="PDBsum" id="6FNR"/>
<dbReference type="PDBsum" id="6FNS"/>
<dbReference type="PDBsum" id="6FNT"/>
<dbReference type="SMR" id="A0R5M8"/>
<dbReference type="STRING" id="246196.MSMEG_6247"/>
<dbReference type="PaxDb" id="246196-MSMEI_6086"/>
<dbReference type="GeneID" id="93460865"/>
<dbReference type="KEGG" id="msb:LJ00_30890"/>
<dbReference type="KEGG" id="msg:MSMEI_6086"/>
<dbReference type="KEGG" id="msm:MSMEG_6247"/>
<dbReference type="PATRIC" id="fig|246196.19.peg.6086"/>
<dbReference type="eggNOG" id="COG4301">
    <property type="taxonomic scope" value="Bacteria"/>
</dbReference>
<dbReference type="OrthoDB" id="5289726at2"/>
<dbReference type="BioCyc" id="MetaCyc:MONOMER-17984"/>
<dbReference type="BRENDA" id="2.1.1.44">
    <property type="organism ID" value="3512"/>
</dbReference>
<dbReference type="UniPathway" id="UPA01014"/>
<dbReference type="EvolutionaryTrace" id="A0R5M8"/>
<dbReference type="Proteomes" id="UP000000757">
    <property type="component" value="Chromosome"/>
</dbReference>
<dbReference type="Proteomes" id="UP000006158">
    <property type="component" value="Chromosome"/>
</dbReference>
<dbReference type="GO" id="GO:0052706">
    <property type="term" value="F:L-histidine N(alpha)-methyltransferase activity"/>
    <property type="evidence" value="ECO:0007669"/>
    <property type="project" value="UniProtKB-UniRule"/>
</dbReference>
<dbReference type="GO" id="GO:0008276">
    <property type="term" value="F:protein methyltransferase activity"/>
    <property type="evidence" value="ECO:0000314"/>
    <property type="project" value="UniProtKB"/>
</dbReference>
<dbReference type="GO" id="GO:0052704">
    <property type="term" value="P:ergothioneine biosynthesis from histidine via gamma-glutamyl-hercynylcysteine sulfoxide"/>
    <property type="evidence" value="ECO:0000314"/>
    <property type="project" value="UniProtKB"/>
</dbReference>
<dbReference type="GO" id="GO:0032259">
    <property type="term" value="P:methylation"/>
    <property type="evidence" value="ECO:0007669"/>
    <property type="project" value="UniProtKB-KW"/>
</dbReference>
<dbReference type="FunFam" id="3.40.50.150:FF:000362">
    <property type="entry name" value="Histidine N-alpha-methyltransferase"/>
    <property type="match status" value="1"/>
</dbReference>
<dbReference type="Gene3D" id="3.40.50.150">
    <property type="entry name" value="Vaccinia Virus protein VP39"/>
    <property type="match status" value="2"/>
</dbReference>
<dbReference type="HAMAP" id="MF_02037">
    <property type="entry name" value="EgtD"/>
    <property type="match status" value="1"/>
</dbReference>
<dbReference type="InterPro" id="IPR035094">
    <property type="entry name" value="EgtD"/>
</dbReference>
<dbReference type="InterPro" id="IPR032888">
    <property type="entry name" value="EgtD_Actinobacteria"/>
</dbReference>
<dbReference type="InterPro" id="IPR051128">
    <property type="entry name" value="EgtD_Methyltrsf_superfamily"/>
</dbReference>
<dbReference type="InterPro" id="IPR019257">
    <property type="entry name" value="MeTrfase_dom"/>
</dbReference>
<dbReference type="InterPro" id="IPR017804">
    <property type="entry name" value="MeTrfase_EgtD-like"/>
</dbReference>
<dbReference type="InterPro" id="IPR029063">
    <property type="entry name" value="SAM-dependent_MTases_sf"/>
</dbReference>
<dbReference type="NCBIfam" id="TIGR03438">
    <property type="entry name" value="egtD_ergothio"/>
    <property type="match status" value="1"/>
</dbReference>
<dbReference type="PANTHER" id="PTHR43397">
    <property type="entry name" value="ERGOTHIONEINE BIOSYNTHESIS PROTEIN 1"/>
    <property type="match status" value="1"/>
</dbReference>
<dbReference type="PANTHER" id="PTHR43397:SF1">
    <property type="entry name" value="ERGOTHIONEINE BIOSYNTHESIS PROTEIN 1"/>
    <property type="match status" value="1"/>
</dbReference>
<dbReference type="Pfam" id="PF10017">
    <property type="entry name" value="Methyltransf_33"/>
    <property type="match status" value="1"/>
</dbReference>
<dbReference type="PIRSF" id="PIRSF018005">
    <property type="entry name" value="UCP018005"/>
    <property type="match status" value="1"/>
</dbReference>
<dbReference type="SUPFAM" id="SSF53335">
    <property type="entry name" value="S-adenosyl-L-methionine-dependent methyltransferases"/>
    <property type="match status" value="1"/>
</dbReference>
<accession>A0R5M8</accession>
<accession>I7GAE1</accession>
<gene>
    <name evidence="6" type="primary">egtD</name>
    <name type="ordered locus">MSMEG_6247</name>
    <name type="ordered locus">MSMEI_6086</name>
</gene>
<name>EGTD_MYCS2</name>
<comment type="function">
    <text evidence="1 5">Catalyzes the SAM-dependent triple methylation of the alpha-amino group of histidine to form hercynine, a step in the biosynthesis pathway of ergothioneine. Among all the proteinogenic amino acids, only L-histidine is a substrate.</text>
</comment>
<comment type="catalytic activity">
    <reaction evidence="1 5">
        <text>L-histidine + 3 S-adenosyl-L-methionine = hercynine + 3 S-adenosyl-L-homocysteine + 3 H(+)</text>
        <dbReference type="Rhea" id="RHEA:38471"/>
        <dbReference type="ChEBI" id="CHEBI:15378"/>
        <dbReference type="ChEBI" id="CHEBI:15781"/>
        <dbReference type="ChEBI" id="CHEBI:57595"/>
        <dbReference type="ChEBI" id="CHEBI:57856"/>
        <dbReference type="ChEBI" id="CHEBI:59789"/>
        <dbReference type="EC" id="2.1.1.44"/>
    </reaction>
</comment>
<comment type="biophysicochemical properties">
    <kinetics>
        <KM evidence="5">109 uM for L-histidine</KM>
        <KM evidence="5">17.7 uM for N-alpha-methyl-L-histidine</KM>
        <KM evidence="5">25.3 uM for N-alpha,N-alpha-dimethyl-L-histidine</KM>
        <text evidence="5">kcat is 0.58 sec(-1) for the methylation of L-histidine. kcat is 0.23 sec(-1) for the methylation of N-alpha-methyl-L-histidine. kcat is 0.23 sec(-1) for the methylation of N-alpha,N-alpha-dimethyl-L-histidine.</text>
    </kinetics>
</comment>
<comment type="pathway">
    <text evidence="2 9">Amino-acid biosynthesis; ergothioneine biosynthesis.</text>
</comment>
<comment type="subunit">
    <text evidence="3 4">Monomer.</text>
</comment>
<comment type="domain">
    <text evidence="10">Consists of two distinct domains: a typical methyltransferase domain and a unique substrate binding domain.</text>
</comment>
<comment type="disruption phenotype">
    <text evidence="2">Cells lacking this gene are unable to synthesize ergothioneine (ERG), but do not show growth defect. Deletion of egtD from wild-type M.smegmatis and a mycothiol (MSH)-deficient mutant does not affect their susceptibility to tested antibiotics. The ERG- and MSH-deficient double mutant is significantly more sensitive to peroxide than either of the single mutants lacking either ERG or MSH, suggesting that both thiols play a role in protecting M.smegmatis against oxidative stress and that ERG is able to partly compensate for the loss of MSH.</text>
</comment>
<comment type="similarity">
    <text evidence="8">Belongs to the methyltransferase superfamily. EgtD family.</text>
</comment>